<proteinExistence type="evidence at transcript level"/>
<comment type="function">
    <text>Provides adhesiveness to the mussel's foot. Mussels produce one of the strongest water insoluble glues. The mussel's adhesive is a bundle of threads, called a byssus, formed by a fibrous collagenous core coated with adhesive proteins.</text>
</comment>
<comment type="subcellular location">
    <subcellularLocation>
        <location>Secreted</location>
    </subcellularLocation>
</comment>
<comment type="tissue specificity">
    <text>Produced by the byssal gland.</text>
</comment>
<comment type="domain">
    <text>Almost exclusively composed of repeats of a decapeptide.</text>
</comment>
<comment type="PTM">
    <text evidence="1">Hydroxylated on proline (mono- or dihydroxylation) and tyrosine residues (to L-DOPA = 3',4'-dihydroxyphenylalanine) of the tandem repeats.</text>
</comment>
<comment type="online information" name="Protein Spotlight">
    <link uri="https://www.proteinspotlight.org/back_issues/002"/>
    <text>Sticky business - Issue 2 of September 2001</text>
</comment>
<dbReference type="EMBL" id="D63778">
    <property type="protein sequence ID" value="BAA09851.1"/>
    <property type="molecule type" value="mRNA"/>
</dbReference>
<dbReference type="PIR" id="S68957">
    <property type="entry name" value="S68957"/>
</dbReference>
<dbReference type="GO" id="GO:0005576">
    <property type="term" value="C:extracellular region"/>
    <property type="evidence" value="ECO:0007669"/>
    <property type="project" value="UniProtKB-SubCell"/>
</dbReference>
<dbReference type="InterPro" id="IPR002964">
    <property type="entry name" value="Adhesive_plaq"/>
</dbReference>
<dbReference type="PRINTS" id="PR01216">
    <property type="entry name" value="ADHESIVEI"/>
</dbReference>
<protein>
    <recommendedName>
        <fullName>Adhesive plaque matrix protein</fullName>
    </recommendedName>
    <alternativeName>
        <fullName>Foot protein 1</fullName>
    </alternativeName>
    <alternativeName>
        <fullName>MGFP-1</fullName>
        <shortName>MGFP1</shortName>
    </alternativeName>
</protein>
<gene>
    <name type="primary">FP1</name>
</gene>
<accession>Q27409</accession>
<evidence type="ECO:0000250" key="1"/>
<evidence type="ECO:0000255" key="2"/>
<evidence type="ECO:0000256" key="3">
    <source>
        <dbReference type="SAM" id="MobiDB-lite"/>
    </source>
</evidence>
<feature type="signal peptide" evidence="2">
    <location>
        <begin position="1"/>
        <end position="20"/>
    </location>
</feature>
<feature type="chain" id="PRO_0000021286" description="Adhesive plaque matrix protein">
    <location>
        <begin position="21"/>
        <end position="751"/>
    </location>
</feature>
<feature type="repeat" description="1">
    <location>
        <begin position="109"/>
        <end position="118"/>
    </location>
</feature>
<feature type="repeat" description="2">
    <location>
        <begin position="119"/>
        <end position="128"/>
    </location>
</feature>
<feature type="repeat" description="3">
    <location>
        <begin position="129"/>
        <end position="138"/>
    </location>
</feature>
<feature type="repeat" description="4">
    <location>
        <begin position="139"/>
        <end position="148"/>
    </location>
</feature>
<feature type="repeat" description="5">
    <location>
        <begin position="149"/>
        <end position="158"/>
    </location>
</feature>
<feature type="repeat" description="6">
    <location>
        <begin position="159"/>
        <end position="168"/>
    </location>
</feature>
<feature type="repeat" description="7">
    <location>
        <begin position="169"/>
        <end position="178"/>
    </location>
</feature>
<feature type="repeat" description="8">
    <location>
        <begin position="179"/>
        <end position="188"/>
    </location>
</feature>
<feature type="repeat" description="9">
    <location>
        <begin position="189"/>
        <end position="198"/>
    </location>
</feature>
<feature type="repeat" description="10">
    <location>
        <begin position="199"/>
        <end position="208"/>
    </location>
</feature>
<feature type="repeat" description="11">
    <location>
        <begin position="209"/>
        <end position="218"/>
    </location>
</feature>
<feature type="repeat" description="12">
    <location>
        <begin position="219"/>
        <end position="228"/>
    </location>
</feature>
<feature type="repeat" description="13">
    <location>
        <begin position="229"/>
        <end position="238"/>
    </location>
</feature>
<feature type="repeat" description="14">
    <location>
        <begin position="239"/>
        <end position="248"/>
    </location>
</feature>
<feature type="repeat" description="15">
    <location>
        <begin position="249"/>
        <end position="258"/>
    </location>
</feature>
<feature type="repeat" description="16">
    <location>
        <begin position="259"/>
        <end position="268"/>
    </location>
</feature>
<feature type="repeat" description="17">
    <location>
        <begin position="269"/>
        <end position="278"/>
    </location>
</feature>
<feature type="repeat" description="18">
    <location>
        <begin position="279"/>
        <end position="288"/>
    </location>
</feature>
<feature type="repeat" description="19">
    <location>
        <begin position="289"/>
        <end position="298"/>
    </location>
</feature>
<feature type="repeat" description="20">
    <location>
        <begin position="299"/>
        <end position="308"/>
    </location>
</feature>
<feature type="repeat" description="21">
    <location>
        <begin position="309"/>
        <end position="318"/>
    </location>
</feature>
<feature type="repeat" description="22">
    <location>
        <begin position="319"/>
        <end position="328"/>
    </location>
</feature>
<feature type="repeat" description="23">
    <location>
        <begin position="329"/>
        <end position="338"/>
    </location>
</feature>
<feature type="repeat" description="24">
    <location>
        <begin position="339"/>
        <end position="348"/>
    </location>
</feature>
<feature type="repeat" description="25">
    <location>
        <begin position="349"/>
        <end position="358"/>
    </location>
</feature>
<feature type="repeat" description="26">
    <location>
        <begin position="359"/>
        <end position="368"/>
    </location>
</feature>
<feature type="repeat" description="27">
    <location>
        <begin position="369"/>
        <end position="378"/>
    </location>
</feature>
<feature type="repeat" description="28">
    <location>
        <begin position="379"/>
        <end position="388"/>
    </location>
</feature>
<feature type="repeat" description="29">
    <location>
        <begin position="389"/>
        <end position="398"/>
    </location>
</feature>
<feature type="repeat" description="30">
    <location>
        <begin position="399"/>
        <end position="408"/>
    </location>
</feature>
<feature type="repeat" description="31">
    <location>
        <begin position="409"/>
        <end position="418"/>
    </location>
</feature>
<feature type="repeat" description="32">
    <location>
        <begin position="419"/>
        <end position="428"/>
    </location>
</feature>
<feature type="repeat" description="33">
    <location>
        <begin position="429"/>
        <end position="438"/>
    </location>
</feature>
<feature type="repeat" description="34">
    <location>
        <begin position="439"/>
        <end position="448"/>
    </location>
</feature>
<feature type="repeat" description="35">
    <location>
        <begin position="449"/>
        <end position="458"/>
    </location>
</feature>
<feature type="repeat" description="36">
    <location>
        <begin position="459"/>
        <end position="468"/>
    </location>
</feature>
<feature type="repeat" description="37">
    <location>
        <begin position="469"/>
        <end position="478"/>
    </location>
</feature>
<feature type="repeat" description="38">
    <location>
        <begin position="479"/>
        <end position="488"/>
    </location>
</feature>
<feature type="repeat" description="39">
    <location>
        <begin position="489"/>
        <end position="498"/>
    </location>
</feature>
<feature type="repeat" description="40">
    <location>
        <begin position="499"/>
        <end position="508"/>
    </location>
</feature>
<feature type="repeat" description="41">
    <location>
        <begin position="509"/>
        <end position="518"/>
    </location>
</feature>
<feature type="repeat" description="42">
    <location>
        <begin position="519"/>
        <end position="528"/>
    </location>
</feature>
<feature type="repeat" description="43">
    <location>
        <begin position="529"/>
        <end position="538"/>
    </location>
</feature>
<feature type="repeat" description="44">
    <location>
        <begin position="539"/>
        <end position="548"/>
    </location>
</feature>
<feature type="repeat" description="45">
    <location>
        <begin position="549"/>
        <end position="558"/>
    </location>
</feature>
<feature type="repeat" description="46">
    <location>
        <begin position="559"/>
        <end position="568"/>
    </location>
</feature>
<feature type="repeat" description="47">
    <location>
        <begin position="569"/>
        <end position="578"/>
    </location>
</feature>
<feature type="repeat" description="48">
    <location>
        <begin position="579"/>
        <end position="588"/>
    </location>
</feature>
<feature type="repeat" description="49">
    <location>
        <begin position="589"/>
        <end position="598"/>
    </location>
</feature>
<feature type="repeat" description="50">
    <location>
        <begin position="599"/>
        <end position="608"/>
    </location>
</feature>
<feature type="repeat" description="51">
    <location>
        <begin position="609"/>
        <end position="618"/>
    </location>
</feature>
<feature type="repeat" description="52">
    <location>
        <begin position="619"/>
        <end position="628"/>
    </location>
</feature>
<feature type="repeat" description="53">
    <location>
        <begin position="629"/>
        <end position="638"/>
    </location>
</feature>
<feature type="repeat" description="54">
    <location>
        <begin position="639"/>
        <end position="648"/>
    </location>
</feature>
<feature type="repeat" description="55">
    <location>
        <begin position="649"/>
        <end position="658"/>
    </location>
</feature>
<feature type="repeat" description="56; truncated">
    <location>
        <begin position="659"/>
        <end position="662"/>
    </location>
</feature>
<feature type="repeat" description="57">
    <location>
        <begin position="663"/>
        <end position="672"/>
    </location>
</feature>
<feature type="repeat" description="58">
    <location>
        <begin position="673"/>
        <end position="682"/>
    </location>
</feature>
<feature type="repeat" description="59">
    <location>
        <begin position="683"/>
        <end position="692"/>
    </location>
</feature>
<feature type="repeat" description="60">
    <location>
        <begin position="693"/>
        <end position="702"/>
    </location>
</feature>
<feature type="repeat" description="61">
    <location>
        <begin position="703"/>
        <end position="712"/>
    </location>
</feature>
<feature type="repeat" description="62">
    <location>
        <begin position="713"/>
        <end position="722"/>
    </location>
</feature>
<feature type="repeat" description="63">
    <location>
        <begin position="723"/>
        <end position="732"/>
    </location>
</feature>
<feature type="region of interest" description="Nonrepetitive linker">
    <location>
        <begin position="21"/>
        <end position="41"/>
    </location>
</feature>
<feature type="region of interest" description="63 X 10 AA tandem repeats of Y-[KR]-[APTS]-K-[KPMSLTIVA]-[STR]-Y-[PLS]-[PASRQT]-[STI]">
    <location>
        <begin position="109"/>
        <end position="732"/>
    </location>
</feature>
<feature type="region of interest" description="Disordered" evidence="3">
    <location>
        <begin position="158"/>
        <end position="359"/>
    </location>
</feature>
<feature type="region of interest" description="Disordered" evidence="3">
    <location>
        <begin position="397"/>
        <end position="636"/>
    </location>
</feature>
<feature type="region of interest" description="Disordered" evidence="3">
    <location>
        <begin position="660"/>
        <end position="751"/>
    </location>
</feature>
<feature type="compositionally biased region" description="Low complexity" evidence="3">
    <location>
        <begin position="158"/>
        <end position="167"/>
    </location>
</feature>
<feature type="compositionally biased region" description="Pro residues" evidence="3">
    <location>
        <begin position="168"/>
        <end position="184"/>
    </location>
</feature>
<feature type="compositionally biased region" description="Low complexity" evidence="3">
    <location>
        <begin position="185"/>
        <end position="262"/>
    </location>
</feature>
<feature type="compositionally biased region" description="Low complexity" evidence="3">
    <location>
        <begin position="288"/>
        <end position="343"/>
    </location>
</feature>
<feature type="compositionally biased region" description="Low complexity" evidence="3">
    <location>
        <begin position="350"/>
        <end position="359"/>
    </location>
</feature>
<feature type="compositionally biased region" description="Low complexity" evidence="3">
    <location>
        <begin position="444"/>
        <end position="486"/>
    </location>
</feature>
<feature type="compositionally biased region" description="Low complexity" evidence="3">
    <location>
        <begin position="662"/>
        <end position="677"/>
    </location>
</feature>
<feature type="compositionally biased region" description="Pro residues" evidence="3">
    <location>
        <begin position="678"/>
        <end position="690"/>
    </location>
</feature>
<feature type="compositionally biased region" description="Low complexity" evidence="3">
    <location>
        <begin position="691"/>
        <end position="721"/>
    </location>
</feature>
<name>FP1_MYTGA</name>
<reference key="1">
    <citation type="journal article" date="1994" name="Biol. Bull.">
        <title>The adhesive protein cDNA of Mytilus galloprovincialis encodes decapeptide repeats but no hexapeptide motif.</title>
        <authorList>
            <person name="Inoue K."/>
            <person name="Odo S."/>
        </authorList>
    </citation>
    <scope>NUCLEOTIDE SEQUENCE [MRNA]</scope>
    <source>
        <tissue>Foot</tissue>
    </source>
</reference>
<sequence>MEGIKLNLCLLCIFTCDILGFSNGNIYNAHGSAYAGASAGAYKTLPNAYPYGTKHGPVYKPVKTSYHPTNSYPPTYGSKTNYLPLAKKLSSYKPIKTTYNAKTNYPPVYKPKMTYPPTYKPKPSYPPTYKPKPSYPATYKSKSSYPSSYKPKKTYPPTYKPKLTYPPTYKPKPSYPPTYKPKPSYPATYKSKSSYPPSYKTKKTYPSSYKPKKTYPSTYKPKVSYPPTYKSKKSYPPIYKTKASYPSSYKPKKTYPSTYKPKISYPPTYKAKPSYPTSYRAKPSYPSTYKAKPSYPPTYKAKPSYPPTYKAKPTYPSTYKAKPSYPPTYKAKPSYPPTYKAKPSYPPSYKPKTTYPPSYKPKISYPPTYKAKPSYPPIYKAKPSYPPTYKAKPSYLPTYKAKPSYPPTYKAKPRYPTTYKAKPSYPPTYKAKPSYPPTYKAKLSYPPTYKAKPSYPPTYKAKPSYPPTYKAKPSYPPTYKTKPSYPRTYKAKPSYSSTYKAKPSYPPTYKAKPSYPPTYKAKPSYPPTYKAKPSYPPTYKAKPSYPPTYKAKPSYPQTYKAKSSYPPTYKAKPSYPPTYKAKPSYPPTYKAKPSYPPTYKAKPSYPPTYKAKPSYPPTYKAKPSYPPTYKAKPSYPPTYKAKPSYPPTYKAKPSYPATYPSTYKAKPSYPPTYKAKPSYPPTYKPKPSYPPTYKSKSSYPSSYKPKKTYPPTYKPKLTYPPIYKPKPSYPPTYKSSYPPRYKKKISYPSQY</sequence>
<organism>
    <name type="scientific">Mytilus galloprovincialis</name>
    <name type="common">Mediterranean mussel</name>
    <dbReference type="NCBI Taxonomy" id="29158"/>
    <lineage>
        <taxon>Eukaryota</taxon>
        <taxon>Metazoa</taxon>
        <taxon>Spiralia</taxon>
        <taxon>Lophotrochozoa</taxon>
        <taxon>Mollusca</taxon>
        <taxon>Bivalvia</taxon>
        <taxon>Autobranchia</taxon>
        <taxon>Pteriomorphia</taxon>
        <taxon>Mytilida</taxon>
        <taxon>Mytiloidea</taxon>
        <taxon>Mytilidae</taxon>
        <taxon>Mytilinae</taxon>
        <taxon>Mytilus</taxon>
    </lineage>
</organism>
<keyword id="KW-0379">Hydroxylation</keyword>
<keyword id="KW-0677">Repeat</keyword>
<keyword id="KW-0964">Secreted</keyword>
<keyword id="KW-0732">Signal</keyword>